<organism>
    <name type="scientific">Helicobacter pylori (strain HPAG1)</name>
    <dbReference type="NCBI Taxonomy" id="357544"/>
    <lineage>
        <taxon>Bacteria</taxon>
        <taxon>Pseudomonadati</taxon>
        <taxon>Campylobacterota</taxon>
        <taxon>Epsilonproteobacteria</taxon>
        <taxon>Campylobacterales</taxon>
        <taxon>Helicobacteraceae</taxon>
        <taxon>Helicobacter</taxon>
    </lineage>
</organism>
<proteinExistence type="inferred from homology"/>
<protein>
    <recommendedName>
        <fullName evidence="1">Alanine--tRNA ligase</fullName>
        <ecNumber evidence="1">6.1.1.7</ecNumber>
    </recommendedName>
    <alternativeName>
        <fullName evidence="1">Alanyl-tRNA synthetase</fullName>
        <shortName evidence="1">AlaRS</shortName>
    </alternativeName>
</protein>
<evidence type="ECO:0000255" key="1">
    <source>
        <dbReference type="HAMAP-Rule" id="MF_00036"/>
    </source>
</evidence>
<feature type="chain" id="PRO_0000347632" description="Alanine--tRNA ligase">
    <location>
        <begin position="1"/>
        <end position="847"/>
    </location>
</feature>
<feature type="binding site" evidence="1">
    <location>
        <position position="554"/>
    </location>
    <ligand>
        <name>Zn(2+)</name>
        <dbReference type="ChEBI" id="CHEBI:29105"/>
    </ligand>
</feature>
<feature type="binding site" evidence="1">
    <location>
        <position position="558"/>
    </location>
    <ligand>
        <name>Zn(2+)</name>
        <dbReference type="ChEBI" id="CHEBI:29105"/>
    </ligand>
</feature>
<feature type="binding site" evidence="1">
    <location>
        <position position="656"/>
    </location>
    <ligand>
        <name>Zn(2+)</name>
        <dbReference type="ChEBI" id="CHEBI:29105"/>
    </ligand>
</feature>
<feature type="binding site" evidence="1">
    <location>
        <position position="660"/>
    </location>
    <ligand>
        <name>Zn(2+)</name>
        <dbReference type="ChEBI" id="CHEBI:29105"/>
    </ligand>
</feature>
<sequence length="847" mass="94917">MDIRNEFLQFFQNKGHAVYPSMPLVPNDATLLFTNAGMVQFKDIFTGIVPHPSIPRATSSQLCMRAGGKHNDLENVGYTARHHTLFEMLGNFSFGDYFKEEAILFAWEFVTKNLGFKPKDLYISVHEKDDEAVKLWEKFVPVDRIKKMGDKDNFWQMGDSGPCGPCSEIYIDQGEKHFKGSEDYFGGEGDRFLEIWNLVFMQYERSNDGVLSPLPKPSIDTGMGLERVQALLEHKLNNFDSSLFAPLMEEISELTSLDYTSEFQPSFRVVADHARAVAFLLAQGVHFNKEGRGYVLRRILRRALRHGYLMGLKEAFLYKVVGVVCEQFSNTHAYLKESKEMVMKECFEEEERFLETLESGMELFNLSLKHLNENKIFDGKIAFKLYDTFGFPLDLTNDMLRSHGACVDMQGFELCMQEQVKRSKASWKGKQDNADFSAILNAYAPNEFVGYETTECPAKALGFFDSDFKEIIEANPNQEVWVLLEKTPFYAEGGGAIGDRGALFKDNEEAAIVLDTKNFFGLNFSLLEIKKALKKGDQVIAQVSDERLEIAKHHSATHLLQSALREVLGSHVSQAGSLVESKRLRFDFSHPKVLNDEELEKVEDLVNAQIFKHLNSHVEHMPLNQAKDKGALALFGEKYAENVRVVSFKEASIELCGGIHVENTGLIGGFRIVKESGVSSGVRRIEAVCGKAFYQLAKEESKELKNAKTLLKNNDVIAGINKLKESVKNSQKAPVSVDLPVEKIHGVNLVVGVVEQGDIKEMIDRLKSKHERLLAMVFKKENERITLACGVKNAPIKANVWANEVAQILGGKGGGRDDFASAGGKDIENLQAALNLAKNTALKALEG</sequence>
<comment type="function">
    <text evidence="1">Catalyzes the attachment of alanine to tRNA(Ala) in a two-step reaction: alanine is first activated by ATP to form Ala-AMP and then transferred to the acceptor end of tRNA(Ala). Also edits incorrectly charged Ser-tRNA(Ala) and Gly-tRNA(Ala) via its editing domain.</text>
</comment>
<comment type="catalytic activity">
    <reaction evidence="1">
        <text>tRNA(Ala) + L-alanine + ATP = L-alanyl-tRNA(Ala) + AMP + diphosphate</text>
        <dbReference type="Rhea" id="RHEA:12540"/>
        <dbReference type="Rhea" id="RHEA-COMP:9657"/>
        <dbReference type="Rhea" id="RHEA-COMP:9923"/>
        <dbReference type="ChEBI" id="CHEBI:30616"/>
        <dbReference type="ChEBI" id="CHEBI:33019"/>
        <dbReference type="ChEBI" id="CHEBI:57972"/>
        <dbReference type="ChEBI" id="CHEBI:78442"/>
        <dbReference type="ChEBI" id="CHEBI:78497"/>
        <dbReference type="ChEBI" id="CHEBI:456215"/>
        <dbReference type="EC" id="6.1.1.7"/>
    </reaction>
</comment>
<comment type="cofactor">
    <cofactor evidence="1">
        <name>Zn(2+)</name>
        <dbReference type="ChEBI" id="CHEBI:29105"/>
    </cofactor>
    <text evidence="1">Binds 1 zinc ion per subunit.</text>
</comment>
<comment type="subcellular location">
    <subcellularLocation>
        <location evidence="1">Cytoplasm</location>
    </subcellularLocation>
</comment>
<comment type="domain">
    <text evidence="1">Consists of three domains; the N-terminal catalytic domain, the editing domain and the C-terminal C-Ala domain. The editing domain removes incorrectly charged amino acids, while the C-Ala domain, along with tRNA(Ala), serves as a bridge to cooperatively bring together the editing and aminoacylation centers thus stimulating deacylation of misacylated tRNAs.</text>
</comment>
<comment type="similarity">
    <text evidence="1">Belongs to the class-II aminoacyl-tRNA synthetase family.</text>
</comment>
<accession>Q1CS22</accession>
<dbReference type="EC" id="6.1.1.7" evidence="1"/>
<dbReference type="EMBL" id="CP000241">
    <property type="protein sequence ID" value="ABF85250.1"/>
    <property type="molecule type" value="Genomic_DNA"/>
</dbReference>
<dbReference type="RefSeq" id="WP_000354750.1">
    <property type="nucleotide sequence ID" value="NC_008086.1"/>
</dbReference>
<dbReference type="SMR" id="Q1CS22"/>
<dbReference type="KEGG" id="hpa:HPAG1_1183"/>
<dbReference type="HOGENOM" id="CLU_004485_1_1_7"/>
<dbReference type="GO" id="GO:0005829">
    <property type="term" value="C:cytosol"/>
    <property type="evidence" value="ECO:0007669"/>
    <property type="project" value="TreeGrafter"/>
</dbReference>
<dbReference type="GO" id="GO:0004813">
    <property type="term" value="F:alanine-tRNA ligase activity"/>
    <property type="evidence" value="ECO:0007669"/>
    <property type="project" value="UniProtKB-UniRule"/>
</dbReference>
<dbReference type="GO" id="GO:0002161">
    <property type="term" value="F:aminoacyl-tRNA deacylase activity"/>
    <property type="evidence" value="ECO:0007669"/>
    <property type="project" value="TreeGrafter"/>
</dbReference>
<dbReference type="GO" id="GO:0005524">
    <property type="term" value="F:ATP binding"/>
    <property type="evidence" value="ECO:0007669"/>
    <property type="project" value="UniProtKB-UniRule"/>
</dbReference>
<dbReference type="GO" id="GO:0000049">
    <property type="term" value="F:tRNA binding"/>
    <property type="evidence" value="ECO:0007669"/>
    <property type="project" value="UniProtKB-KW"/>
</dbReference>
<dbReference type="GO" id="GO:0008270">
    <property type="term" value="F:zinc ion binding"/>
    <property type="evidence" value="ECO:0007669"/>
    <property type="project" value="UniProtKB-UniRule"/>
</dbReference>
<dbReference type="GO" id="GO:0006419">
    <property type="term" value="P:alanyl-tRNA aminoacylation"/>
    <property type="evidence" value="ECO:0007669"/>
    <property type="project" value="UniProtKB-UniRule"/>
</dbReference>
<dbReference type="GO" id="GO:0045892">
    <property type="term" value="P:negative regulation of DNA-templated transcription"/>
    <property type="evidence" value="ECO:0007669"/>
    <property type="project" value="TreeGrafter"/>
</dbReference>
<dbReference type="CDD" id="cd00673">
    <property type="entry name" value="AlaRS_core"/>
    <property type="match status" value="1"/>
</dbReference>
<dbReference type="FunFam" id="3.10.310.40:FF:000001">
    <property type="entry name" value="Alanine--tRNA ligase"/>
    <property type="match status" value="1"/>
</dbReference>
<dbReference type="FunFam" id="3.30.54.20:FF:000001">
    <property type="entry name" value="Alanine--tRNA ligase"/>
    <property type="match status" value="1"/>
</dbReference>
<dbReference type="FunFam" id="3.30.930.10:FF:000004">
    <property type="entry name" value="Alanine--tRNA ligase"/>
    <property type="match status" value="1"/>
</dbReference>
<dbReference type="FunFam" id="3.30.980.10:FF:000004">
    <property type="entry name" value="Alanine--tRNA ligase, cytoplasmic"/>
    <property type="match status" value="1"/>
</dbReference>
<dbReference type="Gene3D" id="2.40.30.130">
    <property type="match status" value="1"/>
</dbReference>
<dbReference type="Gene3D" id="3.10.310.40">
    <property type="match status" value="1"/>
</dbReference>
<dbReference type="Gene3D" id="3.30.54.20">
    <property type="match status" value="1"/>
</dbReference>
<dbReference type="Gene3D" id="3.30.930.10">
    <property type="entry name" value="Bira Bifunctional Protein, Domain 2"/>
    <property type="match status" value="1"/>
</dbReference>
<dbReference type="Gene3D" id="3.30.980.10">
    <property type="entry name" value="Threonyl-trna Synthetase, Chain A, domain 2"/>
    <property type="match status" value="1"/>
</dbReference>
<dbReference type="HAMAP" id="MF_00036_B">
    <property type="entry name" value="Ala_tRNA_synth_B"/>
    <property type="match status" value="1"/>
</dbReference>
<dbReference type="InterPro" id="IPR045864">
    <property type="entry name" value="aa-tRNA-synth_II/BPL/LPL"/>
</dbReference>
<dbReference type="InterPro" id="IPR002318">
    <property type="entry name" value="Ala-tRNA-lgiase_IIc"/>
</dbReference>
<dbReference type="InterPro" id="IPR018162">
    <property type="entry name" value="Ala-tRNA-ligase_IIc_anticod-bd"/>
</dbReference>
<dbReference type="InterPro" id="IPR018165">
    <property type="entry name" value="Ala-tRNA-synth_IIc_core"/>
</dbReference>
<dbReference type="InterPro" id="IPR018164">
    <property type="entry name" value="Ala-tRNA-synth_IIc_N"/>
</dbReference>
<dbReference type="InterPro" id="IPR050058">
    <property type="entry name" value="Ala-tRNA_ligase"/>
</dbReference>
<dbReference type="InterPro" id="IPR023033">
    <property type="entry name" value="Ala_tRNA_ligase_euk/bac"/>
</dbReference>
<dbReference type="InterPro" id="IPR003156">
    <property type="entry name" value="DHHA1_dom"/>
</dbReference>
<dbReference type="InterPro" id="IPR018163">
    <property type="entry name" value="Thr/Ala-tRNA-synth_IIc_edit"/>
</dbReference>
<dbReference type="InterPro" id="IPR009000">
    <property type="entry name" value="Transl_B-barrel_sf"/>
</dbReference>
<dbReference type="InterPro" id="IPR012947">
    <property type="entry name" value="tRNA_SAD"/>
</dbReference>
<dbReference type="NCBIfam" id="TIGR00344">
    <property type="entry name" value="alaS"/>
    <property type="match status" value="1"/>
</dbReference>
<dbReference type="PANTHER" id="PTHR11777:SF9">
    <property type="entry name" value="ALANINE--TRNA LIGASE, CYTOPLASMIC"/>
    <property type="match status" value="1"/>
</dbReference>
<dbReference type="PANTHER" id="PTHR11777">
    <property type="entry name" value="ALANYL-TRNA SYNTHETASE"/>
    <property type="match status" value="1"/>
</dbReference>
<dbReference type="Pfam" id="PF02272">
    <property type="entry name" value="DHHA1"/>
    <property type="match status" value="1"/>
</dbReference>
<dbReference type="Pfam" id="PF01411">
    <property type="entry name" value="tRNA-synt_2c"/>
    <property type="match status" value="1"/>
</dbReference>
<dbReference type="Pfam" id="PF07973">
    <property type="entry name" value="tRNA_SAD"/>
    <property type="match status" value="1"/>
</dbReference>
<dbReference type="PRINTS" id="PR00980">
    <property type="entry name" value="TRNASYNTHALA"/>
</dbReference>
<dbReference type="SMART" id="SM00863">
    <property type="entry name" value="tRNA_SAD"/>
    <property type="match status" value="1"/>
</dbReference>
<dbReference type="SUPFAM" id="SSF55681">
    <property type="entry name" value="Class II aaRS and biotin synthetases"/>
    <property type="match status" value="1"/>
</dbReference>
<dbReference type="SUPFAM" id="SSF101353">
    <property type="entry name" value="Putative anticodon-binding domain of alanyl-tRNA synthetase (AlaRS)"/>
    <property type="match status" value="1"/>
</dbReference>
<dbReference type="SUPFAM" id="SSF55186">
    <property type="entry name" value="ThrRS/AlaRS common domain"/>
    <property type="match status" value="1"/>
</dbReference>
<dbReference type="SUPFAM" id="SSF50447">
    <property type="entry name" value="Translation proteins"/>
    <property type="match status" value="1"/>
</dbReference>
<dbReference type="PROSITE" id="PS50860">
    <property type="entry name" value="AA_TRNA_LIGASE_II_ALA"/>
    <property type="match status" value="1"/>
</dbReference>
<keyword id="KW-0030">Aminoacyl-tRNA synthetase</keyword>
<keyword id="KW-0067">ATP-binding</keyword>
<keyword id="KW-0963">Cytoplasm</keyword>
<keyword id="KW-0436">Ligase</keyword>
<keyword id="KW-0479">Metal-binding</keyword>
<keyword id="KW-0547">Nucleotide-binding</keyword>
<keyword id="KW-0648">Protein biosynthesis</keyword>
<keyword id="KW-0694">RNA-binding</keyword>
<keyword id="KW-0820">tRNA-binding</keyword>
<keyword id="KW-0862">Zinc</keyword>
<name>SYA_HELPH</name>
<reference key="1">
    <citation type="journal article" date="2006" name="Proc. Natl. Acad. Sci. U.S.A.">
        <title>The complete genome sequence of a chronic atrophic gastritis Helicobacter pylori strain: evolution during disease progression.</title>
        <authorList>
            <person name="Oh J.D."/>
            <person name="Kling-Baeckhed H."/>
            <person name="Giannakis M."/>
            <person name="Xu J."/>
            <person name="Fulton R.S."/>
            <person name="Fulton L.A."/>
            <person name="Cordum H.S."/>
            <person name="Wang C."/>
            <person name="Elliott G."/>
            <person name="Edwards J."/>
            <person name="Mardis E.R."/>
            <person name="Engstrand L.G."/>
            <person name="Gordon J.I."/>
        </authorList>
    </citation>
    <scope>NUCLEOTIDE SEQUENCE [LARGE SCALE GENOMIC DNA]</scope>
    <source>
        <strain>HPAG1</strain>
    </source>
</reference>
<gene>
    <name evidence="1" type="primary">alaS</name>
    <name type="ordered locus">HPAG1_1183</name>
</gene>